<comment type="function">
    <text evidence="1">Required for the assembly or recycling of the small Tim proteins in the mitochondrial intermembrane, thereby participating in the import and insertion of multi-pass transmembrane proteins into the mitochondrial inner membrane.</text>
</comment>
<comment type="subunit">
    <text evidence="1">Interacts with the small Tim proteins.</text>
</comment>
<comment type="subcellular location">
    <subcellularLocation>
        <location evidence="1">Mitochondrion intermembrane space</location>
    </subcellularLocation>
    <subcellularLocation>
        <location evidence="1">Mitochondrion membrane</location>
        <topology evidence="1">Peripheral membrane protein</topology>
    </subcellularLocation>
</comment>
<gene>
    <name type="primary">HOT13</name>
    <name type="ordered locus">KLLA0F25982g</name>
</gene>
<protein>
    <recommendedName>
        <fullName>Helper of Tim protein 13</fullName>
    </recommendedName>
</protein>
<sequence>MEKAQIYGKLVDKESRCEHWHGPLDVIALRFKCCNGYYACYECHQELVPHVTERYNINDETVPLVICGVCKLEMSFAAYSDSLQCPNCRSQFNPGCKLHYDMYFMKDDEPENLR</sequence>
<dbReference type="EMBL" id="CR382126">
    <property type="protein sequence ID" value="CAG98945.1"/>
    <property type="molecule type" value="Genomic_DNA"/>
</dbReference>
<dbReference type="RefSeq" id="XP_456237.1">
    <property type="nucleotide sequence ID" value="XM_456237.1"/>
</dbReference>
<dbReference type="FunCoup" id="Q6CIK2">
    <property type="interactions" value="29"/>
</dbReference>
<dbReference type="STRING" id="284590.Q6CIK2"/>
<dbReference type="PaxDb" id="284590-Q6CIK2"/>
<dbReference type="KEGG" id="kla:KLLA0_F25982g"/>
<dbReference type="eggNOG" id="KOG1940">
    <property type="taxonomic scope" value="Eukaryota"/>
</dbReference>
<dbReference type="HOGENOM" id="CLU_143932_0_0_1"/>
<dbReference type="InParanoid" id="Q6CIK2"/>
<dbReference type="OMA" id="ETRCAHY"/>
<dbReference type="Proteomes" id="UP000000598">
    <property type="component" value="Chromosome F"/>
</dbReference>
<dbReference type="GO" id="GO:0005758">
    <property type="term" value="C:mitochondrial intermembrane space"/>
    <property type="evidence" value="ECO:0007669"/>
    <property type="project" value="UniProtKB-SubCell"/>
</dbReference>
<dbReference type="GO" id="GO:0031966">
    <property type="term" value="C:mitochondrial membrane"/>
    <property type="evidence" value="ECO:0007669"/>
    <property type="project" value="UniProtKB-SubCell"/>
</dbReference>
<dbReference type="GO" id="GO:0008270">
    <property type="term" value="F:zinc ion binding"/>
    <property type="evidence" value="ECO:0007669"/>
    <property type="project" value="UniProtKB-KW"/>
</dbReference>
<dbReference type="GO" id="GO:0045041">
    <property type="term" value="P:protein import into mitochondrial intermembrane space"/>
    <property type="evidence" value="ECO:0007669"/>
    <property type="project" value="TreeGrafter"/>
</dbReference>
<dbReference type="InterPro" id="IPR052604">
    <property type="entry name" value="Mito_Tim_assembly_helper"/>
</dbReference>
<dbReference type="InterPro" id="IPR016694">
    <property type="entry name" value="UCP017292"/>
</dbReference>
<dbReference type="InterPro" id="IPR008913">
    <property type="entry name" value="Znf_CHY"/>
</dbReference>
<dbReference type="InterPro" id="IPR037274">
    <property type="entry name" value="Znf_CHY_sf"/>
</dbReference>
<dbReference type="PANTHER" id="PTHR28082:SF1">
    <property type="entry name" value="HELPER OF TIM PROTEIN 13"/>
    <property type="match status" value="1"/>
</dbReference>
<dbReference type="PANTHER" id="PTHR28082">
    <property type="entry name" value="ZINC FINGER PROTEIN"/>
    <property type="match status" value="1"/>
</dbReference>
<dbReference type="Pfam" id="PF05495">
    <property type="entry name" value="zf-CHY"/>
    <property type="match status" value="1"/>
</dbReference>
<dbReference type="PIRSF" id="PIRSF017292">
    <property type="entry name" value="UCP017292_Znf_CHY"/>
    <property type="match status" value="1"/>
</dbReference>
<dbReference type="SUPFAM" id="SSF161219">
    <property type="entry name" value="CHY zinc finger-like"/>
    <property type="match status" value="1"/>
</dbReference>
<dbReference type="PROSITE" id="PS51266">
    <property type="entry name" value="ZF_CHY"/>
    <property type="match status" value="1"/>
</dbReference>
<reference key="1">
    <citation type="journal article" date="2004" name="Nature">
        <title>Genome evolution in yeasts.</title>
        <authorList>
            <person name="Dujon B."/>
            <person name="Sherman D."/>
            <person name="Fischer G."/>
            <person name="Durrens P."/>
            <person name="Casaregola S."/>
            <person name="Lafontaine I."/>
            <person name="de Montigny J."/>
            <person name="Marck C."/>
            <person name="Neuveglise C."/>
            <person name="Talla E."/>
            <person name="Goffard N."/>
            <person name="Frangeul L."/>
            <person name="Aigle M."/>
            <person name="Anthouard V."/>
            <person name="Babour A."/>
            <person name="Barbe V."/>
            <person name="Barnay S."/>
            <person name="Blanchin S."/>
            <person name="Beckerich J.-M."/>
            <person name="Beyne E."/>
            <person name="Bleykasten C."/>
            <person name="Boisrame A."/>
            <person name="Boyer J."/>
            <person name="Cattolico L."/>
            <person name="Confanioleri F."/>
            <person name="de Daruvar A."/>
            <person name="Despons L."/>
            <person name="Fabre E."/>
            <person name="Fairhead C."/>
            <person name="Ferry-Dumazet H."/>
            <person name="Groppi A."/>
            <person name="Hantraye F."/>
            <person name="Hennequin C."/>
            <person name="Jauniaux N."/>
            <person name="Joyet P."/>
            <person name="Kachouri R."/>
            <person name="Kerrest A."/>
            <person name="Koszul R."/>
            <person name="Lemaire M."/>
            <person name="Lesur I."/>
            <person name="Ma L."/>
            <person name="Muller H."/>
            <person name="Nicaud J.-M."/>
            <person name="Nikolski M."/>
            <person name="Oztas S."/>
            <person name="Ozier-Kalogeropoulos O."/>
            <person name="Pellenz S."/>
            <person name="Potier S."/>
            <person name="Richard G.-F."/>
            <person name="Straub M.-L."/>
            <person name="Suleau A."/>
            <person name="Swennen D."/>
            <person name="Tekaia F."/>
            <person name="Wesolowski-Louvel M."/>
            <person name="Westhof E."/>
            <person name="Wirth B."/>
            <person name="Zeniou-Meyer M."/>
            <person name="Zivanovic Y."/>
            <person name="Bolotin-Fukuhara M."/>
            <person name="Thierry A."/>
            <person name="Bouchier C."/>
            <person name="Caudron B."/>
            <person name="Scarpelli C."/>
            <person name="Gaillardin C."/>
            <person name="Weissenbach J."/>
            <person name="Wincker P."/>
            <person name="Souciet J.-L."/>
        </authorList>
    </citation>
    <scope>NUCLEOTIDE SEQUENCE [LARGE SCALE GENOMIC DNA]</scope>
    <source>
        <strain>ATCC 8585 / CBS 2359 / DSM 70799 / NBRC 1267 / NRRL Y-1140 / WM37</strain>
    </source>
</reference>
<keyword id="KW-0472">Membrane</keyword>
<keyword id="KW-0479">Metal-binding</keyword>
<keyword id="KW-0496">Mitochondrion</keyword>
<keyword id="KW-0653">Protein transport</keyword>
<keyword id="KW-1185">Reference proteome</keyword>
<keyword id="KW-0811">Translocation</keyword>
<keyword id="KW-0813">Transport</keyword>
<keyword id="KW-0862">Zinc</keyword>
<keyword id="KW-0863">Zinc-finger</keyword>
<organism>
    <name type="scientific">Kluyveromyces lactis (strain ATCC 8585 / CBS 2359 / DSM 70799 / NBRC 1267 / NRRL Y-1140 / WM37)</name>
    <name type="common">Yeast</name>
    <name type="synonym">Candida sphaerica</name>
    <dbReference type="NCBI Taxonomy" id="284590"/>
    <lineage>
        <taxon>Eukaryota</taxon>
        <taxon>Fungi</taxon>
        <taxon>Dikarya</taxon>
        <taxon>Ascomycota</taxon>
        <taxon>Saccharomycotina</taxon>
        <taxon>Saccharomycetes</taxon>
        <taxon>Saccharomycetales</taxon>
        <taxon>Saccharomycetaceae</taxon>
        <taxon>Kluyveromyces</taxon>
    </lineage>
</organism>
<name>HOT13_KLULA</name>
<accession>Q6CIK2</accession>
<evidence type="ECO:0000250" key="1"/>
<evidence type="ECO:0000255" key="2">
    <source>
        <dbReference type="PROSITE-ProRule" id="PRU00601"/>
    </source>
</evidence>
<feature type="chain" id="PRO_0000228009" description="Helper of Tim protein 13">
    <location>
        <begin position="1"/>
        <end position="114"/>
    </location>
</feature>
<feature type="zinc finger region" description="CHY-type; degenerate" evidence="2">
    <location>
        <begin position="10"/>
        <end position="90"/>
    </location>
</feature>
<feature type="binding site" evidence="2">
    <location>
        <position position="17"/>
    </location>
    <ligand>
        <name>Zn(2+)</name>
        <dbReference type="ChEBI" id="CHEBI:29105"/>
        <label>1</label>
    </ligand>
</feature>
<feature type="binding site" evidence="2">
    <location>
        <position position="19"/>
    </location>
    <ligand>
        <name>Zn(2+)</name>
        <dbReference type="ChEBI" id="CHEBI:29105"/>
        <label>1</label>
    </ligand>
</feature>
<feature type="binding site" evidence="2">
    <location>
        <position position="40"/>
    </location>
    <ligand>
        <name>Zn(2+)</name>
        <dbReference type="ChEBI" id="CHEBI:29105"/>
        <label>1</label>
    </ligand>
</feature>
<feature type="binding site" evidence="2">
    <location>
        <position position="43"/>
    </location>
    <ligand>
        <name>Zn(2+)</name>
        <dbReference type="ChEBI" id="CHEBI:29105"/>
        <label>1</label>
    </ligand>
</feature>
<feature type="binding site" evidence="2">
    <location>
        <position position="67"/>
    </location>
    <ligand>
        <name>Zn(2+)</name>
        <dbReference type="ChEBI" id="CHEBI:29105"/>
        <label>2</label>
    </ligand>
</feature>
<feature type="binding site" evidence="2">
    <location>
        <position position="70"/>
    </location>
    <ligand>
        <name>Zn(2+)</name>
        <dbReference type="ChEBI" id="CHEBI:29105"/>
        <label>2</label>
    </ligand>
</feature>
<feature type="binding site" evidence="2">
    <location>
        <position position="85"/>
    </location>
    <ligand>
        <name>Zn(2+)</name>
        <dbReference type="ChEBI" id="CHEBI:29105"/>
        <label>2</label>
    </ligand>
</feature>
<feature type="binding site" evidence="2">
    <location>
        <position position="88"/>
    </location>
    <ligand>
        <name>Zn(2+)</name>
        <dbReference type="ChEBI" id="CHEBI:29105"/>
        <label>2</label>
    </ligand>
</feature>
<proteinExistence type="inferred from homology"/>